<organism>
    <name type="scientific">Bacillus subtilis (strain 168)</name>
    <dbReference type="NCBI Taxonomy" id="224308"/>
    <lineage>
        <taxon>Bacteria</taxon>
        <taxon>Bacillati</taxon>
        <taxon>Bacillota</taxon>
        <taxon>Bacilli</taxon>
        <taxon>Bacillales</taxon>
        <taxon>Bacillaceae</taxon>
        <taxon>Bacillus</taxon>
    </lineage>
</organism>
<feature type="chain" id="PRO_0000360209" description="Uncharacterized N-acetyltransferase YdfB">
    <location>
        <begin position="1"/>
        <end position="261"/>
    </location>
</feature>
<feature type="domain" description="N-acetyltransferase" evidence="1">
    <location>
        <begin position="135"/>
        <end position="261"/>
    </location>
</feature>
<reference key="1">
    <citation type="submission" date="1997-03" db="EMBL/GenBank/DDBJ databases">
        <title>A 148 kbp sequence of the region between 35 and 47 degree of the Bacillus subtilis genome.</title>
        <authorList>
            <person name="Kasahara Y."/>
            <person name="Nakai S."/>
            <person name="Lee S."/>
            <person name="Sadaie Y."/>
            <person name="Ogasawara N."/>
        </authorList>
    </citation>
    <scope>NUCLEOTIDE SEQUENCE [GENOMIC DNA]</scope>
    <source>
        <strain>168</strain>
    </source>
</reference>
<reference key="2">
    <citation type="journal article" date="1997" name="Nature">
        <title>The complete genome sequence of the Gram-positive bacterium Bacillus subtilis.</title>
        <authorList>
            <person name="Kunst F."/>
            <person name="Ogasawara N."/>
            <person name="Moszer I."/>
            <person name="Albertini A.M."/>
            <person name="Alloni G."/>
            <person name="Azevedo V."/>
            <person name="Bertero M.G."/>
            <person name="Bessieres P."/>
            <person name="Bolotin A."/>
            <person name="Borchert S."/>
            <person name="Borriss R."/>
            <person name="Boursier L."/>
            <person name="Brans A."/>
            <person name="Braun M."/>
            <person name="Brignell S.C."/>
            <person name="Bron S."/>
            <person name="Brouillet S."/>
            <person name="Bruschi C.V."/>
            <person name="Caldwell B."/>
            <person name="Capuano V."/>
            <person name="Carter N.M."/>
            <person name="Choi S.-K."/>
            <person name="Codani J.-J."/>
            <person name="Connerton I.F."/>
            <person name="Cummings N.J."/>
            <person name="Daniel R.A."/>
            <person name="Denizot F."/>
            <person name="Devine K.M."/>
            <person name="Duesterhoeft A."/>
            <person name="Ehrlich S.D."/>
            <person name="Emmerson P.T."/>
            <person name="Entian K.-D."/>
            <person name="Errington J."/>
            <person name="Fabret C."/>
            <person name="Ferrari E."/>
            <person name="Foulger D."/>
            <person name="Fritz C."/>
            <person name="Fujita M."/>
            <person name="Fujita Y."/>
            <person name="Fuma S."/>
            <person name="Galizzi A."/>
            <person name="Galleron N."/>
            <person name="Ghim S.-Y."/>
            <person name="Glaser P."/>
            <person name="Goffeau A."/>
            <person name="Golightly E.J."/>
            <person name="Grandi G."/>
            <person name="Guiseppi G."/>
            <person name="Guy B.J."/>
            <person name="Haga K."/>
            <person name="Haiech J."/>
            <person name="Harwood C.R."/>
            <person name="Henaut A."/>
            <person name="Hilbert H."/>
            <person name="Holsappel S."/>
            <person name="Hosono S."/>
            <person name="Hullo M.-F."/>
            <person name="Itaya M."/>
            <person name="Jones L.-M."/>
            <person name="Joris B."/>
            <person name="Karamata D."/>
            <person name="Kasahara Y."/>
            <person name="Klaerr-Blanchard M."/>
            <person name="Klein C."/>
            <person name="Kobayashi Y."/>
            <person name="Koetter P."/>
            <person name="Koningstein G."/>
            <person name="Krogh S."/>
            <person name="Kumano M."/>
            <person name="Kurita K."/>
            <person name="Lapidus A."/>
            <person name="Lardinois S."/>
            <person name="Lauber J."/>
            <person name="Lazarevic V."/>
            <person name="Lee S.-M."/>
            <person name="Levine A."/>
            <person name="Liu H."/>
            <person name="Masuda S."/>
            <person name="Mauel C."/>
            <person name="Medigue C."/>
            <person name="Medina N."/>
            <person name="Mellado R.P."/>
            <person name="Mizuno M."/>
            <person name="Moestl D."/>
            <person name="Nakai S."/>
            <person name="Noback M."/>
            <person name="Noone D."/>
            <person name="O'Reilly M."/>
            <person name="Ogawa K."/>
            <person name="Ogiwara A."/>
            <person name="Oudega B."/>
            <person name="Park S.-H."/>
            <person name="Parro V."/>
            <person name="Pohl T.M."/>
            <person name="Portetelle D."/>
            <person name="Porwollik S."/>
            <person name="Prescott A.M."/>
            <person name="Presecan E."/>
            <person name="Pujic P."/>
            <person name="Purnelle B."/>
            <person name="Rapoport G."/>
            <person name="Rey M."/>
            <person name="Reynolds S."/>
            <person name="Rieger M."/>
            <person name="Rivolta C."/>
            <person name="Rocha E."/>
            <person name="Roche B."/>
            <person name="Rose M."/>
            <person name="Sadaie Y."/>
            <person name="Sato T."/>
            <person name="Scanlan E."/>
            <person name="Schleich S."/>
            <person name="Schroeter R."/>
            <person name="Scoffone F."/>
            <person name="Sekiguchi J."/>
            <person name="Sekowska A."/>
            <person name="Seror S.J."/>
            <person name="Serror P."/>
            <person name="Shin B.-S."/>
            <person name="Soldo B."/>
            <person name="Sorokin A."/>
            <person name="Tacconi E."/>
            <person name="Takagi T."/>
            <person name="Takahashi H."/>
            <person name="Takemaru K."/>
            <person name="Takeuchi M."/>
            <person name="Tamakoshi A."/>
            <person name="Tanaka T."/>
            <person name="Terpstra P."/>
            <person name="Tognoni A."/>
            <person name="Tosato V."/>
            <person name="Uchiyama S."/>
            <person name="Vandenbol M."/>
            <person name="Vannier F."/>
            <person name="Vassarotti A."/>
            <person name="Viari A."/>
            <person name="Wambutt R."/>
            <person name="Wedler E."/>
            <person name="Wedler H."/>
            <person name="Weitzenegger T."/>
            <person name="Winters P."/>
            <person name="Wipat A."/>
            <person name="Yamamoto H."/>
            <person name="Yamane K."/>
            <person name="Yasumoto K."/>
            <person name="Yata K."/>
            <person name="Yoshida K."/>
            <person name="Yoshikawa H.-F."/>
            <person name="Zumstein E."/>
            <person name="Yoshikawa H."/>
            <person name="Danchin A."/>
        </authorList>
    </citation>
    <scope>NUCLEOTIDE SEQUENCE [LARGE SCALE GENOMIC DNA]</scope>
    <source>
        <strain>168</strain>
    </source>
</reference>
<keyword id="KW-0012">Acyltransferase</keyword>
<keyword id="KW-1185">Reference proteome</keyword>
<keyword id="KW-0808">Transferase</keyword>
<proteinExistence type="inferred from homology"/>
<evidence type="ECO:0000255" key="1">
    <source>
        <dbReference type="PROSITE-ProRule" id="PRU00532"/>
    </source>
</evidence>
<evidence type="ECO:0000305" key="2"/>
<name>YDFB_BACSU</name>
<sequence length="261" mass="29685">MSVLQELTKKKYSSLKTMFDDKYCPTFVYSILDQTIPGAVYADDQTFPKSFFIGTESGIYFIAGDQGNRDFHDFIAGYYEEQVKSSKRFTLFSSSDTWDSVLKPILKDDLNQMRRAAFSYQPKSFKKTLQLPKGLVLKRIDEDIISHSTAFNSAYYEEYWNSVSQFASKGFGFAVLHGNHVVSECTSIFLGHNRAEMDIYTLEEYRGLGLAYCVANRFIAFCMENGIVPSWDCDICNNSSIALAAKLGFKTVTEYTIYYSG</sequence>
<dbReference type="EC" id="2.3.1.-"/>
<dbReference type="EMBL" id="AB001488">
    <property type="protein sequence ID" value="BAA19369.1"/>
    <property type="molecule type" value="Genomic_DNA"/>
</dbReference>
<dbReference type="EMBL" id="AL009126">
    <property type="protein sequence ID" value="CAB12342.1"/>
    <property type="molecule type" value="Genomic_DNA"/>
</dbReference>
<dbReference type="PIR" id="H69779">
    <property type="entry name" value="H69779"/>
</dbReference>
<dbReference type="RefSeq" id="NP_388416.1">
    <property type="nucleotide sequence ID" value="NC_000964.3"/>
</dbReference>
<dbReference type="RefSeq" id="WP_010886420.1">
    <property type="nucleotide sequence ID" value="NZ_OZ025638.1"/>
</dbReference>
<dbReference type="SMR" id="P96679"/>
<dbReference type="FunCoup" id="P96679">
    <property type="interactions" value="73"/>
</dbReference>
<dbReference type="STRING" id="224308.BSU05350"/>
<dbReference type="PaxDb" id="224308-BSU05350"/>
<dbReference type="EnsemblBacteria" id="CAB12342">
    <property type="protein sequence ID" value="CAB12342"/>
    <property type="gene ID" value="BSU_05350"/>
</dbReference>
<dbReference type="GeneID" id="938079"/>
<dbReference type="KEGG" id="bsu:BSU05350"/>
<dbReference type="PATRIC" id="fig|224308.43.peg.558"/>
<dbReference type="eggNOG" id="COG1670">
    <property type="taxonomic scope" value="Bacteria"/>
</dbReference>
<dbReference type="InParanoid" id="P96679"/>
<dbReference type="OrthoDB" id="7054616at2"/>
<dbReference type="BioCyc" id="BSUB:BSU05350-MONOMER"/>
<dbReference type="Proteomes" id="UP000001570">
    <property type="component" value="Chromosome"/>
</dbReference>
<dbReference type="GO" id="GO:0016747">
    <property type="term" value="F:acyltransferase activity, transferring groups other than amino-acyl groups"/>
    <property type="evidence" value="ECO:0007669"/>
    <property type="project" value="InterPro"/>
</dbReference>
<dbReference type="Gene3D" id="3.40.630.30">
    <property type="match status" value="1"/>
</dbReference>
<dbReference type="InterPro" id="IPR016181">
    <property type="entry name" value="Acyl_CoA_acyltransferase"/>
</dbReference>
<dbReference type="InterPro" id="IPR027365">
    <property type="entry name" value="GNAT_acetyltra_YdfB-like"/>
</dbReference>
<dbReference type="InterPro" id="IPR000182">
    <property type="entry name" value="GNAT_dom"/>
</dbReference>
<dbReference type="PANTHER" id="PTHR31143">
    <property type="match status" value="1"/>
</dbReference>
<dbReference type="PANTHER" id="PTHR31143:SF2">
    <property type="entry name" value="FR47-LIKE DOMAIN-CONTAINING PROTEIN-RELATED"/>
    <property type="match status" value="1"/>
</dbReference>
<dbReference type="Pfam" id="PF12746">
    <property type="entry name" value="GNAT_acetyltran"/>
    <property type="match status" value="1"/>
</dbReference>
<dbReference type="SUPFAM" id="SSF55729">
    <property type="entry name" value="Acyl-CoA N-acyltransferases (Nat)"/>
    <property type="match status" value="1"/>
</dbReference>
<dbReference type="PROSITE" id="PS51186">
    <property type="entry name" value="GNAT"/>
    <property type="match status" value="1"/>
</dbReference>
<protein>
    <recommendedName>
        <fullName>Uncharacterized N-acetyltransferase YdfB</fullName>
        <ecNumber>2.3.1.-</ecNumber>
    </recommendedName>
</protein>
<gene>
    <name type="primary">ydfB</name>
    <name type="ordered locus">BSU05350</name>
</gene>
<accession>P96679</accession>
<accession>Q797H1</accession>
<comment type="similarity">
    <text evidence="2">Belongs to the acetyltransferase family.</text>
</comment>